<name>UBP11_CANLF</name>
<feature type="chain" id="PRO_0000080631" description="Ubiquitin carboxyl-terminal hydrolase 11">
    <location>
        <begin position="1" status="less than"/>
        <end position="445"/>
    </location>
</feature>
<feature type="domain" description="USP">
    <location>
        <begin position="1"/>
        <end position="412"/>
    </location>
</feature>
<feature type="region of interest" description="Disordered" evidence="4">
    <location>
        <begin position="127"/>
        <end position="194"/>
    </location>
</feature>
<feature type="region of interest" description="Disordered" evidence="4">
    <location>
        <begin position="416"/>
        <end position="445"/>
    </location>
</feature>
<feature type="compositionally biased region" description="Acidic residues" evidence="4">
    <location>
        <begin position="131"/>
        <end position="140"/>
    </location>
</feature>
<feature type="compositionally biased region" description="Low complexity" evidence="4">
    <location>
        <begin position="420"/>
        <end position="439"/>
    </location>
</feature>
<feature type="active site" description="Nucleophile" evidence="2 3">
    <location>
        <position position="362"/>
    </location>
</feature>
<feature type="active site" description="Proton acceptor" evidence="2 3">
    <location>
        <position position="370"/>
    </location>
</feature>
<feature type="modified residue" description="Phosphoserine" evidence="1">
    <location>
        <position position="130"/>
    </location>
</feature>
<feature type="modified residue" description="Phosphoserine" evidence="1">
    <location>
        <position position="430"/>
    </location>
</feature>
<feature type="non-terminal residue">
    <location>
        <position position="1"/>
    </location>
</feature>
<accession>Q01988</accession>
<protein>
    <recommendedName>
        <fullName>Ubiquitin carboxyl-terminal hydrolase 11</fullName>
        <ecNumber evidence="1">3.4.19.12</ecNumber>
    </recommendedName>
    <alternativeName>
        <fullName>Deubiquitinating enzyme 11</fullName>
    </alternativeName>
    <alternativeName>
        <fullName>Ubiquitin thioesterase 11</fullName>
    </alternativeName>
    <alternativeName>
        <fullName>Ubiquitin-specific-processing protease 11</fullName>
    </alternativeName>
</protein>
<keyword id="KW-0158">Chromosome</keyword>
<keyword id="KW-0963">Cytoplasm</keyword>
<keyword id="KW-0378">Hydrolase</keyword>
<keyword id="KW-0539">Nucleus</keyword>
<keyword id="KW-0597">Phosphoprotein</keyword>
<keyword id="KW-0645">Protease</keyword>
<keyword id="KW-1185">Reference proteome</keyword>
<keyword id="KW-0788">Thiol protease</keyword>
<keyword id="KW-0833">Ubl conjugation pathway</keyword>
<proteinExistence type="evidence at transcript level"/>
<dbReference type="EC" id="3.4.19.12" evidence="1"/>
<dbReference type="EMBL" id="L03387">
    <property type="protein sequence ID" value="AAA30875.1"/>
    <property type="molecule type" value="mRNA"/>
</dbReference>
<dbReference type="PIR" id="PC1174">
    <property type="entry name" value="I46225"/>
</dbReference>
<dbReference type="SMR" id="Q01988"/>
<dbReference type="FunCoup" id="Q01988">
    <property type="interactions" value="645"/>
</dbReference>
<dbReference type="STRING" id="9615.ENSCAFP00000058620"/>
<dbReference type="MEROPS" id="C19.014"/>
<dbReference type="PaxDb" id="9612-ENSCAFP00000022125"/>
<dbReference type="eggNOG" id="KOG1870">
    <property type="taxonomic scope" value="Eukaryota"/>
</dbReference>
<dbReference type="InParanoid" id="Q01988"/>
<dbReference type="OrthoDB" id="265776at2759"/>
<dbReference type="Proteomes" id="UP000002254">
    <property type="component" value="Unplaced"/>
</dbReference>
<dbReference type="Proteomes" id="UP000694429">
    <property type="component" value="Unplaced"/>
</dbReference>
<dbReference type="Proteomes" id="UP000694542">
    <property type="component" value="Unplaced"/>
</dbReference>
<dbReference type="Proteomes" id="UP000805418">
    <property type="component" value="Unplaced"/>
</dbReference>
<dbReference type="GO" id="GO:0005694">
    <property type="term" value="C:chromosome"/>
    <property type="evidence" value="ECO:0007669"/>
    <property type="project" value="UniProtKB-SubCell"/>
</dbReference>
<dbReference type="GO" id="GO:0005737">
    <property type="term" value="C:cytoplasm"/>
    <property type="evidence" value="ECO:0007669"/>
    <property type="project" value="UniProtKB-SubCell"/>
</dbReference>
<dbReference type="GO" id="GO:0005634">
    <property type="term" value="C:nucleus"/>
    <property type="evidence" value="ECO:0000250"/>
    <property type="project" value="UniProtKB"/>
</dbReference>
<dbReference type="GO" id="GO:0004843">
    <property type="term" value="F:cysteine-type deubiquitinase activity"/>
    <property type="evidence" value="ECO:0000250"/>
    <property type="project" value="UniProtKB"/>
</dbReference>
<dbReference type="GO" id="GO:0004197">
    <property type="term" value="F:cysteine-type endopeptidase activity"/>
    <property type="evidence" value="ECO:0000250"/>
    <property type="project" value="UniProtKB"/>
</dbReference>
<dbReference type="GO" id="GO:0016579">
    <property type="term" value="P:protein deubiquitination"/>
    <property type="evidence" value="ECO:0000250"/>
    <property type="project" value="UniProtKB"/>
</dbReference>
<dbReference type="GO" id="GO:0006508">
    <property type="term" value="P:proteolysis"/>
    <property type="evidence" value="ECO:0007669"/>
    <property type="project" value="UniProtKB-KW"/>
</dbReference>
<dbReference type="CDD" id="cd02674">
    <property type="entry name" value="Peptidase_C19R"/>
    <property type="match status" value="1"/>
</dbReference>
<dbReference type="Gene3D" id="3.90.70.10">
    <property type="entry name" value="Cysteine proteinases"/>
    <property type="match status" value="1"/>
</dbReference>
<dbReference type="InterPro" id="IPR038765">
    <property type="entry name" value="Papain-like_cys_pep_sf"/>
</dbReference>
<dbReference type="InterPro" id="IPR001394">
    <property type="entry name" value="Peptidase_C19_UCH"/>
</dbReference>
<dbReference type="InterPro" id="IPR050185">
    <property type="entry name" value="Ub_carboxyl-term_hydrolase"/>
</dbReference>
<dbReference type="InterPro" id="IPR018200">
    <property type="entry name" value="USP_CS"/>
</dbReference>
<dbReference type="InterPro" id="IPR028889">
    <property type="entry name" value="USP_dom"/>
</dbReference>
<dbReference type="PANTHER" id="PTHR21646">
    <property type="entry name" value="UBIQUITIN CARBOXYL-TERMINAL HYDROLASE"/>
    <property type="match status" value="1"/>
</dbReference>
<dbReference type="PANTHER" id="PTHR21646:SF29">
    <property type="entry name" value="UBIQUITIN CARBOXYL-TERMINAL HYDROLASE 11"/>
    <property type="match status" value="1"/>
</dbReference>
<dbReference type="Pfam" id="PF00443">
    <property type="entry name" value="UCH"/>
    <property type="match status" value="1"/>
</dbReference>
<dbReference type="SUPFAM" id="SSF54001">
    <property type="entry name" value="Cysteine proteinases"/>
    <property type="match status" value="1"/>
</dbReference>
<dbReference type="PROSITE" id="PS00973">
    <property type="entry name" value="USP_2"/>
    <property type="match status" value="1"/>
</dbReference>
<dbReference type="PROSITE" id="PS50235">
    <property type="entry name" value="USP_3"/>
    <property type="match status" value="1"/>
</dbReference>
<gene>
    <name type="primary">USP11</name>
</gene>
<organism>
    <name type="scientific">Canis lupus familiaris</name>
    <name type="common">Dog</name>
    <name type="synonym">Canis familiaris</name>
    <dbReference type="NCBI Taxonomy" id="9615"/>
    <lineage>
        <taxon>Eukaryota</taxon>
        <taxon>Metazoa</taxon>
        <taxon>Chordata</taxon>
        <taxon>Craniata</taxon>
        <taxon>Vertebrata</taxon>
        <taxon>Euteleostomi</taxon>
        <taxon>Mammalia</taxon>
        <taxon>Eutheria</taxon>
        <taxon>Laurasiatheria</taxon>
        <taxon>Carnivora</taxon>
        <taxon>Caniformia</taxon>
        <taxon>Canidae</taxon>
        <taxon>Canis</taxon>
    </lineage>
</organism>
<sequence length="445" mass="50892">NSARADLCVALAKHTGMSPERMMVADVFSHRFYKIYQLEESLSSILDRDDIFIYEVSGRSAIGENSREDVVLPIYLRERTPARDYNNSYYGLMLFGHPLLVSVPRDRLSWDALYHILLYRLSRYVTRPSSDDEDDGDEKDIEDKDNIPKPGHVAGASSQDSGAGSGGAQLWSRRRKPAPVDNSPGPSHWPQRARRKHLFTLQTVNSNGTSDRSTFNEDTHAQPYIAIDWEPEMKKRYYDEVEAEGYVKHDCVGYVLKKAPVRLQECIELFTTVETLEKENPWFCPTCKQHQLATKKLDLWMLPETLIIHLKRFSYTKFSREKLDTLVEFPIRDLDFSEFVIKPQNESAPELYKYDLIAVSNHYGGLRDGHYTTFACNKDSGQSDYFDDNSVSPVTENQIESKAAYVLFYQRQDVARRLQPQPSSSDPPASPACGSPPNSEFMDVN</sequence>
<comment type="function">
    <text evidence="1">Protease that can remove conjugated ubiquitin from target proteins and polyubiquitin chains. Inhibits the degradation of target proteins by the proteasome. Cleaves preferentially 'Lys-6' and 'Lys-63'-linked ubiquitin chains. Has lower activity with 'Lys-11' and 'Lys-33'-linked ubiquitin chains, and extremely low activity with 'Lys-27', 'Lys-29' and 'Lys-48'-linked ubiquitin chains (in vitro). Plays a role in the regulation of pathways leading to NF-kappa-B activation. Plays a role in the regulation of DNA repair after double-stranded DNA breaks. Acts as a chromatin regulator via its association with the Polycomb group (PcG) multiprotein PRC1-like complex; may act by deubiquitinating components of the PRC1-like complex. Promotes cell proliferation by deubiquitinating phosphorylated E2F1.</text>
</comment>
<comment type="catalytic activity">
    <reaction evidence="1">
        <text>Thiol-dependent hydrolysis of ester, thioester, amide, peptide and isopeptide bonds formed by the C-terminal Gly of ubiquitin (a 76-residue protein attached to proteins as an intracellular targeting signal).</text>
        <dbReference type="EC" id="3.4.19.12"/>
    </reaction>
</comment>
<comment type="subunit">
    <text evidence="1">Monomer. Interacts with RANBP9/RANBPM. Interacts with BRCA2. Interacts with CHUK/IKKA. Interacts with NFKBIA. Associated component of the Polycomb group (PcG) multiprotein PRC1-like complex.</text>
</comment>
<comment type="subcellular location">
    <subcellularLocation>
        <location evidence="1">Nucleus</location>
    </subcellularLocation>
    <subcellularLocation>
        <location evidence="1">Cytoplasm</location>
    </subcellularLocation>
    <subcellularLocation>
        <location evidence="1">Chromosome</location>
    </subcellularLocation>
    <text evidence="1">Predominantly nuclear. Associates with chromatin.</text>
</comment>
<comment type="similarity">
    <text evidence="5">Belongs to the peptidase C19 family.</text>
</comment>
<comment type="caution">
    <text evidence="6">Was originally thought to be apomucin (also known as mucin core protein; CTM-A).</text>
</comment>
<evidence type="ECO:0000250" key="1">
    <source>
        <dbReference type="UniProtKB" id="P51784"/>
    </source>
</evidence>
<evidence type="ECO:0000255" key="2">
    <source>
        <dbReference type="PROSITE-ProRule" id="PRU10092"/>
    </source>
</evidence>
<evidence type="ECO:0000255" key="3">
    <source>
        <dbReference type="PROSITE-ProRule" id="PRU10093"/>
    </source>
</evidence>
<evidence type="ECO:0000256" key="4">
    <source>
        <dbReference type="SAM" id="MobiDB-lite"/>
    </source>
</evidence>
<evidence type="ECO:0000305" key="5"/>
<evidence type="ECO:0000305" key="6">
    <source>
    </source>
</evidence>
<reference key="1">
    <citation type="journal article" date="1992" name="Biochem. Biophys. Res. Commun.">
        <title>Molecular cloning of the carboxy terminus of a canine tracheobronchial mucin.</title>
        <authorList>
            <person name="Shankar V."/>
            <person name="Tan S."/>
            <person name="Gilmore M.S."/>
            <person name="Sachdev G.P."/>
        </authorList>
    </citation>
    <scope>NUCLEOTIDE SEQUENCE [MRNA]</scope>
    <source>
        <tissue>Trachea</tissue>
    </source>
</reference>